<proteinExistence type="inferred from homology"/>
<comment type="function">
    <text evidence="1">Specifically methylates guanosine-37 in various tRNAs.</text>
</comment>
<comment type="catalytic activity">
    <reaction evidence="1">
        <text>guanosine(37) in tRNA + S-adenosyl-L-methionine = N(1)-methylguanosine(37) in tRNA + S-adenosyl-L-homocysteine + H(+)</text>
        <dbReference type="Rhea" id="RHEA:36899"/>
        <dbReference type="Rhea" id="RHEA-COMP:10145"/>
        <dbReference type="Rhea" id="RHEA-COMP:10147"/>
        <dbReference type="ChEBI" id="CHEBI:15378"/>
        <dbReference type="ChEBI" id="CHEBI:57856"/>
        <dbReference type="ChEBI" id="CHEBI:59789"/>
        <dbReference type="ChEBI" id="CHEBI:73542"/>
        <dbReference type="ChEBI" id="CHEBI:74269"/>
        <dbReference type="EC" id="2.1.1.228"/>
    </reaction>
</comment>
<comment type="subunit">
    <text evidence="1">Homodimer.</text>
</comment>
<comment type="subcellular location">
    <subcellularLocation>
        <location evidence="1">Cytoplasm</location>
    </subcellularLocation>
</comment>
<comment type="similarity">
    <text evidence="1">Belongs to the RNA methyltransferase TrmD family.</text>
</comment>
<name>TRMD_NITMU</name>
<organism>
    <name type="scientific">Nitrosospira multiformis (strain ATCC 25196 / NCIMB 11849 / C 71)</name>
    <dbReference type="NCBI Taxonomy" id="323848"/>
    <lineage>
        <taxon>Bacteria</taxon>
        <taxon>Pseudomonadati</taxon>
        <taxon>Pseudomonadota</taxon>
        <taxon>Betaproteobacteria</taxon>
        <taxon>Nitrosomonadales</taxon>
        <taxon>Nitrosomonadaceae</taxon>
        <taxon>Nitrosospira</taxon>
    </lineage>
</organism>
<reference key="1">
    <citation type="submission" date="2005-08" db="EMBL/GenBank/DDBJ databases">
        <title>Complete sequence of chromosome 1 of Nitrosospira multiformis ATCC 25196.</title>
        <authorList>
            <person name="Copeland A."/>
            <person name="Lucas S."/>
            <person name="Lapidus A."/>
            <person name="Barry K."/>
            <person name="Detter J.C."/>
            <person name="Glavina T."/>
            <person name="Hammon N."/>
            <person name="Israni S."/>
            <person name="Pitluck S."/>
            <person name="Chain P."/>
            <person name="Malfatti S."/>
            <person name="Shin M."/>
            <person name="Vergez L."/>
            <person name="Schmutz J."/>
            <person name="Larimer F."/>
            <person name="Land M."/>
            <person name="Hauser L."/>
            <person name="Kyrpides N."/>
            <person name="Lykidis A."/>
            <person name="Richardson P."/>
        </authorList>
    </citation>
    <scope>NUCLEOTIDE SEQUENCE [LARGE SCALE GENOMIC DNA]</scope>
    <source>
        <strain>ATCC 25196 / NCIMB 11849 / C 71</strain>
    </source>
</reference>
<sequence>MTFDFDVITLFPEMFNAVTRYGVTGRANENAIYRLYTWNPREFTEDNYRRVDDRPYGGGPGMVMLAEPLEKAITAARERQRACGIGSTKVVYLSPQGRPLNQNVVMELSELSALVLLAGRYEGVDERLIERQVDYEISIGDYVVSGGELASMVLMDCVVRQLPGVLGDPESANQDSFTAGLLDFPHYTRPEVYRGSVVPEVLLSGNHARIERWRLQQSLGRTWLRRPDLLALKMEKGLTAEERKLLEEFQHAYEAN</sequence>
<dbReference type="EC" id="2.1.1.228" evidence="1"/>
<dbReference type="EMBL" id="CP000103">
    <property type="protein sequence ID" value="ABB73879.1"/>
    <property type="molecule type" value="Genomic_DNA"/>
</dbReference>
<dbReference type="RefSeq" id="WP_011379933.1">
    <property type="nucleotide sequence ID" value="NC_007614.1"/>
</dbReference>
<dbReference type="SMR" id="Q2YBJ2"/>
<dbReference type="STRING" id="323848.Nmul_A0571"/>
<dbReference type="KEGG" id="nmu:Nmul_A0571"/>
<dbReference type="eggNOG" id="COG0336">
    <property type="taxonomic scope" value="Bacteria"/>
</dbReference>
<dbReference type="HOGENOM" id="CLU_047363_0_2_4"/>
<dbReference type="OrthoDB" id="9807416at2"/>
<dbReference type="Proteomes" id="UP000002718">
    <property type="component" value="Chromosome"/>
</dbReference>
<dbReference type="GO" id="GO:0005829">
    <property type="term" value="C:cytosol"/>
    <property type="evidence" value="ECO:0007669"/>
    <property type="project" value="TreeGrafter"/>
</dbReference>
<dbReference type="GO" id="GO:0052906">
    <property type="term" value="F:tRNA (guanine(37)-N1)-methyltransferase activity"/>
    <property type="evidence" value="ECO:0007669"/>
    <property type="project" value="UniProtKB-UniRule"/>
</dbReference>
<dbReference type="GO" id="GO:0002939">
    <property type="term" value="P:tRNA N1-guanine methylation"/>
    <property type="evidence" value="ECO:0007669"/>
    <property type="project" value="TreeGrafter"/>
</dbReference>
<dbReference type="CDD" id="cd18080">
    <property type="entry name" value="TrmD-like"/>
    <property type="match status" value="1"/>
</dbReference>
<dbReference type="FunFam" id="1.10.1270.20:FF:000001">
    <property type="entry name" value="tRNA (guanine-N(1)-)-methyltransferase"/>
    <property type="match status" value="1"/>
</dbReference>
<dbReference type="FunFam" id="3.40.1280.10:FF:000001">
    <property type="entry name" value="tRNA (guanine-N(1)-)-methyltransferase"/>
    <property type="match status" value="1"/>
</dbReference>
<dbReference type="Gene3D" id="3.40.1280.10">
    <property type="match status" value="1"/>
</dbReference>
<dbReference type="Gene3D" id="1.10.1270.20">
    <property type="entry name" value="tRNA(m1g37)methyltransferase, domain 2"/>
    <property type="match status" value="1"/>
</dbReference>
<dbReference type="HAMAP" id="MF_00605">
    <property type="entry name" value="TrmD"/>
    <property type="match status" value="1"/>
</dbReference>
<dbReference type="InterPro" id="IPR029028">
    <property type="entry name" value="Alpha/beta_knot_MTases"/>
</dbReference>
<dbReference type="InterPro" id="IPR023148">
    <property type="entry name" value="tRNA_m1G_MeTrfase_C_sf"/>
</dbReference>
<dbReference type="InterPro" id="IPR002649">
    <property type="entry name" value="tRNA_m1G_MeTrfase_TrmD"/>
</dbReference>
<dbReference type="InterPro" id="IPR029026">
    <property type="entry name" value="tRNA_m1G_MTases_N"/>
</dbReference>
<dbReference type="InterPro" id="IPR016009">
    <property type="entry name" value="tRNA_MeTrfase_TRMD/TRM10"/>
</dbReference>
<dbReference type="NCBIfam" id="NF000648">
    <property type="entry name" value="PRK00026.1"/>
    <property type="match status" value="1"/>
</dbReference>
<dbReference type="NCBIfam" id="TIGR00088">
    <property type="entry name" value="trmD"/>
    <property type="match status" value="1"/>
</dbReference>
<dbReference type="PANTHER" id="PTHR46417">
    <property type="entry name" value="TRNA (GUANINE-N(1)-)-METHYLTRANSFERASE"/>
    <property type="match status" value="1"/>
</dbReference>
<dbReference type="PANTHER" id="PTHR46417:SF1">
    <property type="entry name" value="TRNA (GUANINE-N(1)-)-METHYLTRANSFERASE"/>
    <property type="match status" value="1"/>
</dbReference>
<dbReference type="Pfam" id="PF01746">
    <property type="entry name" value="tRNA_m1G_MT"/>
    <property type="match status" value="1"/>
</dbReference>
<dbReference type="PIRSF" id="PIRSF000386">
    <property type="entry name" value="tRNA_mtase"/>
    <property type="match status" value="1"/>
</dbReference>
<dbReference type="SUPFAM" id="SSF75217">
    <property type="entry name" value="alpha/beta knot"/>
    <property type="match status" value="1"/>
</dbReference>
<accession>Q2YBJ2</accession>
<gene>
    <name evidence="1" type="primary">trmD</name>
    <name type="ordered locus">Nmul_A0571</name>
</gene>
<evidence type="ECO:0000255" key="1">
    <source>
        <dbReference type="HAMAP-Rule" id="MF_00605"/>
    </source>
</evidence>
<keyword id="KW-0963">Cytoplasm</keyword>
<keyword id="KW-0489">Methyltransferase</keyword>
<keyword id="KW-1185">Reference proteome</keyword>
<keyword id="KW-0949">S-adenosyl-L-methionine</keyword>
<keyword id="KW-0808">Transferase</keyword>
<keyword id="KW-0819">tRNA processing</keyword>
<feature type="chain" id="PRO_0000257442" description="tRNA (guanine-N(1)-)-methyltransferase">
    <location>
        <begin position="1"/>
        <end position="256"/>
    </location>
</feature>
<feature type="binding site" evidence="1">
    <location>
        <position position="119"/>
    </location>
    <ligand>
        <name>S-adenosyl-L-methionine</name>
        <dbReference type="ChEBI" id="CHEBI:59789"/>
    </ligand>
</feature>
<feature type="binding site" evidence="1">
    <location>
        <begin position="139"/>
        <end position="144"/>
    </location>
    <ligand>
        <name>S-adenosyl-L-methionine</name>
        <dbReference type="ChEBI" id="CHEBI:59789"/>
    </ligand>
</feature>
<protein>
    <recommendedName>
        <fullName evidence="1">tRNA (guanine-N(1)-)-methyltransferase</fullName>
        <ecNumber evidence="1">2.1.1.228</ecNumber>
    </recommendedName>
    <alternativeName>
        <fullName evidence="1">M1G-methyltransferase</fullName>
    </alternativeName>
    <alternativeName>
        <fullName evidence="1">tRNA [GM37] methyltransferase</fullName>
    </alternativeName>
</protein>